<protein>
    <recommendedName>
        <fullName>Serine/threonine-protein kinase TEL1</fullName>
        <ecNumber>2.7.11.1</ecNumber>
    </recommendedName>
    <alternativeName>
        <fullName>ATM homolog</fullName>
    </alternativeName>
    <alternativeName>
        <fullName>DNA-damage checkpoint kinase TEL1</fullName>
    </alternativeName>
    <alternativeName>
        <fullName>Telomere length regulation protein 1</fullName>
    </alternativeName>
</protein>
<feature type="chain" id="PRO_0000227704" description="Serine/threonine-protein kinase TEL1">
    <location>
        <begin position="1"/>
        <end position="2761"/>
    </location>
</feature>
<feature type="domain" description="FAT" evidence="3">
    <location>
        <begin position="1692"/>
        <end position="2294"/>
    </location>
</feature>
<feature type="domain" description="PI3K/PI4K catalytic" evidence="2">
    <location>
        <begin position="2404"/>
        <end position="2710"/>
    </location>
</feature>
<feature type="domain" description="FATC" evidence="3 4">
    <location>
        <begin position="2729"/>
        <end position="2761"/>
    </location>
</feature>
<feature type="region of interest" description="G-loop" evidence="2">
    <location>
        <begin position="2410"/>
        <end position="2416"/>
    </location>
</feature>
<feature type="region of interest" description="Catalytic loop" evidence="2">
    <location>
        <begin position="2579"/>
        <end position="2587"/>
    </location>
</feature>
<feature type="region of interest" description="Activation loop" evidence="2">
    <location>
        <begin position="2599"/>
        <end position="2623"/>
    </location>
</feature>
<evidence type="ECO:0000250" key="1"/>
<evidence type="ECO:0000255" key="2">
    <source>
        <dbReference type="PROSITE-ProRule" id="PRU00269"/>
    </source>
</evidence>
<evidence type="ECO:0000255" key="3">
    <source>
        <dbReference type="PROSITE-ProRule" id="PRU00534"/>
    </source>
</evidence>
<evidence type="ECO:0000255" key="4">
    <source>
        <dbReference type="PROSITE-ProRule" id="PRU00535"/>
    </source>
</evidence>
<evidence type="ECO:0000305" key="5"/>
<comment type="function">
    <text evidence="1">Serine/threonine protein kinase which activates checkpoint signaling upon genotoxic stresses such as ionizing radiation (IR), ultraviolet light (UV), or DNA replication stalling, thereby acting as a DNA damage sensor. Recognizes the substrate consensus sequence [ST]-Q. Phosphorylates histone H2A to form H2AS128ph (gamma-H2A) at sites of DNA damage, involved in the regulation of DNA damage response mechanism. Required for the control of telomere length and genome stability (By similarity).</text>
</comment>
<comment type="catalytic activity">
    <reaction>
        <text>L-seryl-[protein] + ATP = O-phospho-L-seryl-[protein] + ADP + H(+)</text>
        <dbReference type="Rhea" id="RHEA:17989"/>
        <dbReference type="Rhea" id="RHEA-COMP:9863"/>
        <dbReference type="Rhea" id="RHEA-COMP:11604"/>
        <dbReference type="ChEBI" id="CHEBI:15378"/>
        <dbReference type="ChEBI" id="CHEBI:29999"/>
        <dbReference type="ChEBI" id="CHEBI:30616"/>
        <dbReference type="ChEBI" id="CHEBI:83421"/>
        <dbReference type="ChEBI" id="CHEBI:456216"/>
        <dbReference type="EC" id="2.7.11.1"/>
    </reaction>
</comment>
<comment type="catalytic activity">
    <reaction>
        <text>L-threonyl-[protein] + ATP = O-phospho-L-threonyl-[protein] + ADP + H(+)</text>
        <dbReference type="Rhea" id="RHEA:46608"/>
        <dbReference type="Rhea" id="RHEA-COMP:11060"/>
        <dbReference type="Rhea" id="RHEA-COMP:11605"/>
        <dbReference type="ChEBI" id="CHEBI:15378"/>
        <dbReference type="ChEBI" id="CHEBI:30013"/>
        <dbReference type="ChEBI" id="CHEBI:30616"/>
        <dbReference type="ChEBI" id="CHEBI:61977"/>
        <dbReference type="ChEBI" id="CHEBI:456216"/>
        <dbReference type="EC" id="2.7.11.1"/>
    </reaction>
</comment>
<comment type="subunit">
    <text evidence="1">Associates with DNA double-strand breaks.</text>
</comment>
<comment type="subcellular location">
    <subcellularLocation>
        <location evidence="1">Nucleus</location>
    </subcellularLocation>
    <subcellularLocation>
        <location evidence="1">Chromosome</location>
        <location evidence="1">Telomere</location>
    </subcellularLocation>
    <text evidence="1">Localizes to nuclear DNA repair foci with other DNA repair proteins in response to DNA double strand breaks.</text>
</comment>
<comment type="similarity">
    <text evidence="5">Belongs to the PI3/PI4-kinase family. ATM subfamily.</text>
</comment>
<gene>
    <name type="primary">TEL1</name>
    <name type="ordered locus">KLLA0E06963g</name>
</gene>
<accession>Q6CP76</accession>
<name>ATM_KLULA</name>
<reference key="1">
    <citation type="journal article" date="2004" name="Nature">
        <title>Genome evolution in yeasts.</title>
        <authorList>
            <person name="Dujon B."/>
            <person name="Sherman D."/>
            <person name="Fischer G."/>
            <person name="Durrens P."/>
            <person name="Casaregola S."/>
            <person name="Lafontaine I."/>
            <person name="de Montigny J."/>
            <person name="Marck C."/>
            <person name="Neuveglise C."/>
            <person name="Talla E."/>
            <person name="Goffard N."/>
            <person name="Frangeul L."/>
            <person name="Aigle M."/>
            <person name="Anthouard V."/>
            <person name="Babour A."/>
            <person name="Barbe V."/>
            <person name="Barnay S."/>
            <person name="Blanchin S."/>
            <person name="Beckerich J.-M."/>
            <person name="Beyne E."/>
            <person name="Bleykasten C."/>
            <person name="Boisrame A."/>
            <person name="Boyer J."/>
            <person name="Cattolico L."/>
            <person name="Confanioleri F."/>
            <person name="de Daruvar A."/>
            <person name="Despons L."/>
            <person name="Fabre E."/>
            <person name="Fairhead C."/>
            <person name="Ferry-Dumazet H."/>
            <person name="Groppi A."/>
            <person name="Hantraye F."/>
            <person name="Hennequin C."/>
            <person name="Jauniaux N."/>
            <person name="Joyet P."/>
            <person name="Kachouri R."/>
            <person name="Kerrest A."/>
            <person name="Koszul R."/>
            <person name="Lemaire M."/>
            <person name="Lesur I."/>
            <person name="Ma L."/>
            <person name="Muller H."/>
            <person name="Nicaud J.-M."/>
            <person name="Nikolski M."/>
            <person name="Oztas S."/>
            <person name="Ozier-Kalogeropoulos O."/>
            <person name="Pellenz S."/>
            <person name="Potier S."/>
            <person name="Richard G.-F."/>
            <person name="Straub M.-L."/>
            <person name="Suleau A."/>
            <person name="Swennen D."/>
            <person name="Tekaia F."/>
            <person name="Wesolowski-Louvel M."/>
            <person name="Westhof E."/>
            <person name="Wirth B."/>
            <person name="Zeniou-Meyer M."/>
            <person name="Zivanovic Y."/>
            <person name="Bolotin-Fukuhara M."/>
            <person name="Thierry A."/>
            <person name="Bouchier C."/>
            <person name="Caudron B."/>
            <person name="Scarpelli C."/>
            <person name="Gaillardin C."/>
            <person name="Weissenbach J."/>
            <person name="Wincker P."/>
            <person name="Souciet J.-L."/>
        </authorList>
    </citation>
    <scope>NUCLEOTIDE SEQUENCE [LARGE SCALE GENOMIC DNA]</scope>
    <source>
        <strain>ATCC 8585 / CBS 2359 / DSM 70799 / NBRC 1267 / NRRL Y-1140 / WM37</strain>
    </source>
</reference>
<keyword id="KW-0067">ATP-binding</keyword>
<keyword id="KW-0156">Chromatin regulator</keyword>
<keyword id="KW-0158">Chromosome</keyword>
<keyword id="KW-0227">DNA damage</keyword>
<keyword id="KW-0418">Kinase</keyword>
<keyword id="KW-0547">Nucleotide-binding</keyword>
<keyword id="KW-0539">Nucleus</keyword>
<keyword id="KW-1185">Reference proteome</keyword>
<keyword id="KW-0723">Serine/threonine-protein kinase</keyword>
<keyword id="KW-0779">Telomere</keyword>
<keyword id="KW-0808">Transferase</keyword>
<dbReference type="EC" id="2.7.11.1"/>
<dbReference type="EMBL" id="CR382125">
    <property type="protein sequence ID" value="CAG99350.1"/>
    <property type="molecule type" value="Genomic_DNA"/>
</dbReference>
<dbReference type="RefSeq" id="XP_454263.1">
    <property type="nucleotide sequence ID" value="XM_454263.1"/>
</dbReference>
<dbReference type="SMR" id="Q6CP76"/>
<dbReference type="FunCoup" id="Q6CP76">
    <property type="interactions" value="112"/>
</dbReference>
<dbReference type="STRING" id="284590.Q6CP76"/>
<dbReference type="PaxDb" id="284590-Q6CP76"/>
<dbReference type="KEGG" id="kla:KLLA0_E06975g"/>
<dbReference type="eggNOG" id="KOG0892">
    <property type="taxonomic scope" value="Eukaryota"/>
</dbReference>
<dbReference type="HOGENOM" id="CLU_000178_8_1_1"/>
<dbReference type="InParanoid" id="Q6CP76"/>
<dbReference type="OMA" id="IYMGWSP"/>
<dbReference type="Proteomes" id="UP000000598">
    <property type="component" value="Chromosome E"/>
</dbReference>
<dbReference type="GO" id="GO:0000781">
    <property type="term" value="C:chromosome, telomeric region"/>
    <property type="evidence" value="ECO:0007669"/>
    <property type="project" value="UniProtKB-SubCell"/>
</dbReference>
<dbReference type="GO" id="GO:0005634">
    <property type="term" value="C:nucleus"/>
    <property type="evidence" value="ECO:0007669"/>
    <property type="project" value="UniProtKB-SubCell"/>
</dbReference>
<dbReference type="GO" id="GO:0005524">
    <property type="term" value="F:ATP binding"/>
    <property type="evidence" value="ECO:0007669"/>
    <property type="project" value="UniProtKB-KW"/>
</dbReference>
<dbReference type="GO" id="GO:0106310">
    <property type="term" value="F:protein serine kinase activity"/>
    <property type="evidence" value="ECO:0007669"/>
    <property type="project" value="RHEA"/>
</dbReference>
<dbReference type="GO" id="GO:0004674">
    <property type="term" value="F:protein serine/threonine kinase activity"/>
    <property type="evidence" value="ECO:0007669"/>
    <property type="project" value="UniProtKB-KW"/>
</dbReference>
<dbReference type="GO" id="GO:0006325">
    <property type="term" value="P:chromatin organization"/>
    <property type="evidence" value="ECO:0007669"/>
    <property type="project" value="UniProtKB-KW"/>
</dbReference>
<dbReference type="GO" id="GO:0006281">
    <property type="term" value="P:DNA repair"/>
    <property type="evidence" value="ECO:0007669"/>
    <property type="project" value="InterPro"/>
</dbReference>
<dbReference type="GO" id="GO:0035556">
    <property type="term" value="P:intracellular signal transduction"/>
    <property type="evidence" value="ECO:0007669"/>
    <property type="project" value="UniProtKB-ARBA"/>
</dbReference>
<dbReference type="CDD" id="cd05171">
    <property type="entry name" value="PIKKc_ATM"/>
    <property type="match status" value="1"/>
</dbReference>
<dbReference type="FunFam" id="3.30.1010.10:FF:000032">
    <property type="entry name" value="Serine/threonine-protein kinase TEL1"/>
    <property type="match status" value="1"/>
</dbReference>
<dbReference type="Gene3D" id="1.10.1070.11">
    <property type="entry name" value="Phosphatidylinositol 3-/4-kinase, catalytic domain"/>
    <property type="match status" value="1"/>
</dbReference>
<dbReference type="Gene3D" id="3.30.1010.10">
    <property type="entry name" value="Phosphatidylinositol 3-kinase Catalytic Subunit, Chain A, domain 4"/>
    <property type="match status" value="1"/>
</dbReference>
<dbReference type="InterPro" id="IPR016024">
    <property type="entry name" value="ARM-type_fold"/>
</dbReference>
<dbReference type="InterPro" id="IPR038980">
    <property type="entry name" value="ATM_plant"/>
</dbReference>
<dbReference type="InterPro" id="IPR003152">
    <property type="entry name" value="FATC_dom"/>
</dbReference>
<dbReference type="InterPro" id="IPR011009">
    <property type="entry name" value="Kinase-like_dom_sf"/>
</dbReference>
<dbReference type="InterPro" id="IPR000403">
    <property type="entry name" value="PI3/4_kinase_cat_dom"/>
</dbReference>
<dbReference type="InterPro" id="IPR036940">
    <property type="entry name" value="PI3/4_kinase_cat_sf"/>
</dbReference>
<dbReference type="InterPro" id="IPR018936">
    <property type="entry name" value="PI3/4_kinase_CS"/>
</dbReference>
<dbReference type="InterPro" id="IPR014009">
    <property type="entry name" value="PIK_FAT"/>
</dbReference>
<dbReference type="InterPro" id="IPR044107">
    <property type="entry name" value="PIKKc_ATM"/>
</dbReference>
<dbReference type="InterPro" id="IPR021668">
    <property type="entry name" value="TAN"/>
</dbReference>
<dbReference type="PANTHER" id="PTHR37079">
    <property type="entry name" value="SERINE/THREONINE-PROTEIN KINASE ATM"/>
    <property type="match status" value="1"/>
</dbReference>
<dbReference type="PANTHER" id="PTHR37079:SF4">
    <property type="entry name" value="SERINE_THREONINE-PROTEIN KINASE ATM"/>
    <property type="match status" value="1"/>
</dbReference>
<dbReference type="Pfam" id="PF02260">
    <property type="entry name" value="FATC"/>
    <property type="match status" value="1"/>
</dbReference>
<dbReference type="Pfam" id="PF00454">
    <property type="entry name" value="PI3_PI4_kinase"/>
    <property type="match status" value="1"/>
</dbReference>
<dbReference type="Pfam" id="PF11640">
    <property type="entry name" value="TAN"/>
    <property type="match status" value="1"/>
</dbReference>
<dbReference type="SMART" id="SM01343">
    <property type="entry name" value="FATC"/>
    <property type="match status" value="1"/>
</dbReference>
<dbReference type="SMART" id="SM00146">
    <property type="entry name" value="PI3Kc"/>
    <property type="match status" value="1"/>
</dbReference>
<dbReference type="SMART" id="SM01342">
    <property type="entry name" value="TAN"/>
    <property type="match status" value="1"/>
</dbReference>
<dbReference type="SUPFAM" id="SSF48371">
    <property type="entry name" value="ARM repeat"/>
    <property type="match status" value="1"/>
</dbReference>
<dbReference type="SUPFAM" id="SSF56112">
    <property type="entry name" value="Protein kinase-like (PK-like)"/>
    <property type="match status" value="1"/>
</dbReference>
<dbReference type="PROSITE" id="PS51189">
    <property type="entry name" value="FAT"/>
    <property type="match status" value="1"/>
</dbReference>
<dbReference type="PROSITE" id="PS51190">
    <property type="entry name" value="FATC"/>
    <property type="match status" value="1"/>
</dbReference>
<dbReference type="PROSITE" id="PS00915">
    <property type="entry name" value="PI3_4_KINASE_1"/>
    <property type="match status" value="1"/>
</dbReference>
<dbReference type="PROSITE" id="PS00916">
    <property type="entry name" value="PI3_4_KINASE_2"/>
    <property type="match status" value="1"/>
</dbReference>
<dbReference type="PROSITE" id="PS50290">
    <property type="entry name" value="PI3_4_KINASE_3"/>
    <property type="match status" value="1"/>
</dbReference>
<sequence length="2761" mass="317046">MSFSFEVSVIVTGLSSLKLKTRNDSLDNLNLLLKTSPTEVPVKAFSPILDAIITIIESEKTRYEKTRLENGKDARIELYENRLGSAAYTLRLFVERNCERFKPKHIKLLSMTLFELMTRPRSRSLITSVADHLTYSLVALCGSPVFQCNFELHQWISLSHDISDAVTYHLDVSYNDKIIANLLQTLLELFQIDTIGIEDIATPVVRMTIKYLTLITKENTNTRTILTLVNSAILRLHLIRFQDVINLSYYTIKHLLRIKLTNENNIGEIARFNLMISEVLYNKTPIIVGEDKDQSYVNKEKLLPALQDYLIHSLKQYDHTKFTLDCVTFIDGPASSKFNWYSFSDICQNEKNCLEDIWLYALSLTMMLKANYQFLEYKESSLAGGSLLFKRRKVKDTFAHMLKDSLTYDDFLCNCIDSDSIKIKTTGLHIGLLYLSIFDCSNIELSHLKEELFRCSQDVRFMLLCLSCFIPMCSQSKNSFSPEEEIRLFKMCVPLLKTSNGCKTACSLLYKLIEFQLEPIKDKSVLQQMSDLYLLSDVNGPALVCNESFKFWMHLHYYAKTFQTVKSPITYVFSWLYARWDQLFTLVVSETHFYVFASWLCGCTHTTFPTFEYSRPSLFHDTWMGLSEERASITGFSLTIRTIELRKQKFAPVFCEEAERVRFMYKLFDLIDESAISATFIDRAIQVLRTIESLVGQRNYTDYLSRFKEIFLLSSSVIDFGQNAQIFSVMEGMISLKDSLLRHIIMDILPTEKVLSTFMQRLAEHTQQTSHQDEFLSHHAKPEAGSIPISEMIEIGFEFALQVHSVSKAFDPLSSFILYSKKLSLPMLNRTLPNLITYLENNENEIPTASLERLTQFLGSSLLAPSFDTSSTSMKLLTRYLEGISKYWVMEDRSQVLTADCNDIFDWIVTQYDESSFSGVEALYELARFMTLLLEKYNLSNSSISGGKQRVFKILSGCITRLPKYLTNRVVSLLGTYVKRVGVTNQRILFKELLQRFNPPQESVETAAFFSLTCTKLSLINEFYLLNSILHLLDNTNFSHLLLYVEKSLDTISTFYGLCSKQDLFHQCRYFIIDQWFTKSAKSKIYEPSIWKVELFEFEFDEFCIRYQMELTSFFFAKSSTYYYIIDHLKKLLNLKQEALLTKYIAPTIALSYVDSGVKDLIFDIAADLLGRKFPNVLTINLDDVIYYFIKLSDLSNLATSLTFWCKIFNSSRFTNMLHYNSSNCMQLNDNVAIAFPIVYKVLKKNVFTDIDDGRSFEYVIQRLVMDLQNCVLIDQKIRVLRQIKLLVLFFEHKLTLFKDIDFFLLELSKFLFNADIFSEVYGFILDLLEFSANNKMDVARSLTELMRFCFTVTDSNVKKTLFPKVNPVLFNFCVSDGKQLYATCYALLTLETNSFGWNDIAQVFKFQEVDRTSVSLLSDLFDNFDYDGSFDANLISPTTIQNLISIPRDNARVSDKFRRWLGNILGEIVYTRPYDHIIPHHCSTLDLESGISGLLQILWVQYQKADDISLRFLLDHIQSIILQDESVLAEISSDSYSSLVNLKNLTDISWEKFENCHGMLNIKLGETFLTLTFTDRSCHYQKWISAFICNILLVIVEKFPSFRILALLCDNTAFLHSAIISQLIKILLVSFPKQRSSFLSDILNRADEIFKTEDRTLKMEVITKVFSIIRGMALNGVQNALYVYDKIKLQPVIPIMLSLGSEIWSLMIYEEFYGEYCTGKMLDYELLYQIYSKIDEKDLFYGLPLSSSLASSLTLISKTKFNSYTNFALSNGRFEEGLRNKDSSCLHEFASVTSSNGFTGLATMLDSNFENPLLSANQYSWALKLNKWDLPIPEARDSFAKSAFSILKDVKEIPDFFSFDDHILKVMDGGSLLKNSQLNLETMESLGLLVSLKKLGSADMNTLTTLNNLRVHDTLNADYLPENVFDILHWSRHFFIESKINNTSVIEHAPGSNFTLQLAKILNLVHASTFCRDQGRFQDLINIVMTLEAAVDDITNNPAIGPSDTITLFCKRISTVESARMLWANKESAMAINMLEDLLQTNLTAVNVENVSLADVQDILMPDAVVDSQLVEWSSFSRHRSPDVIFNDHILYYERDVLNINEPNLRSSICYTYAEFCYKQSQKVDEGELLYLKQKIAKASNQLQEISSIYKNPKLRDAERKEAKRHHNRLSLQNHHDKDRYNKISSSRIAFVSQALHFFLTTLVHSNSRDAEVVDKFCSLWFSYSTDDIINSKLQKEIGTVPSFKFLPWVSQMASKLADSVSPFQDTLQLTLKRMLYKLPYETLYPLISMSLQDSESKVIDPVTKSRVEVVNKIIAALDMYDSGRYGSQFTRPVQAFCSMSVALACHKIPPKMKFLQLDTLNIGKYWLETLPKVHLPLPTLPVKITCSQDGRREGRSYISSIDPKVLISSSGLSLPKIATFTVSDGTRHRVLLKGSNDDLRQDAIMEQVFKQVNKILKANKTTRKQNLSVRTYEVIPLGPRAGLIEFVANSMSLHDILLNLHCNDEISFDKARKTMKAAQNHSVEERVLTFSRITEKIKPQLRRFFFQSFVHAHDWYESRNRYTKSVVTSSIVGYLLGLGDRHLNNILIDIKTGEPIHIDLGVAFDQGKLLPIPELVPFRLTRDIVDGFGVAGIEGLFRNNCERVFKVLQDEKERLLCVLNVLKWDPLYSWKMTPLKKQRLQAKFTGDYDEEEISVSDADFSELLEEDNNNDESIRALKGVESKLYGDGLSVEAIVQELLSSATDKQNLATIYMGWSPFY</sequence>
<organism>
    <name type="scientific">Kluyveromyces lactis (strain ATCC 8585 / CBS 2359 / DSM 70799 / NBRC 1267 / NRRL Y-1140 / WM37)</name>
    <name type="common">Yeast</name>
    <name type="synonym">Candida sphaerica</name>
    <dbReference type="NCBI Taxonomy" id="284590"/>
    <lineage>
        <taxon>Eukaryota</taxon>
        <taxon>Fungi</taxon>
        <taxon>Dikarya</taxon>
        <taxon>Ascomycota</taxon>
        <taxon>Saccharomycotina</taxon>
        <taxon>Saccharomycetes</taxon>
        <taxon>Saccharomycetales</taxon>
        <taxon>Saccharomycetaceae</taxon>
        <taxon>Kluyveromyces</taxon>
    </lineage>
</organism>
<proteinExistence type="inferred from homology"/>